<comment type="function">
    <text evidence="2">With S4 and S5 plays an important role in translational accuracy.</text>
</comment>
<comment type="function">
    <text evidence="2">Interacts with and stabilizes bases of the 16S rRNA that are involved in tRNA selection in the A site and with the mRNA backbone. Located at the interface of the 30S and 50S subunits, it traverses the body of the 30S subunit contacting proteins on the other side and probably holding the rRNA structure together. The combined cluster of proteins S8, S12 and S17 appears to hold together the shoulder and platform of the 30S subunit.</text>
</comment>
<comment type="subunit">
    <text evidence="2">Part of the 30S ribosomal subunit. Contacts proteins S8 and S17. May interact with IF1 in the 30S initiation complex.</text>
</comment>
<comment type="similarity">
    <text evidence="2">Belongs to the universal ribosomal protein uS12 family.</text>
</comment>
<evidence type="ECO:0000250" key="1"/>
<evidence type="ECO:0000255" key="2">
    <source>
        <dbReference type="HAMAP-Rule" id="MF_00403"/>
    </source>
</evidence>
<evidence type="ECO:0000305" key="3"/>
<dbReference type="EMBL" id="AE008691">
    <property type="protein sequence ID" value="AAM25440.1"/>
    <property type="molecule type" value="Genomic_DNA"/>
</dbReference>
<dbReference type="RefSeq" id="WP_011026343.1">
    <property type="nucleotide sequence ID" value="NZ_JANUCV010000001.1"/>
</dbReference>
<dbReference type="SMR" id="Q8R7U9"/>
<dbReference type="STRING" id="273068.TTE2298"/>
<dbReference type="KEGG" id="tte:TTE2298"/>
<dbReference type="eggNOG" id="COG0048">
    <property type="taxonomic scope" value="Bacteria"/>
</dbReference>
<dbReference type="HOGENOM" id="CLU_104295_1_2_9"/>
<dbReference type="OrthoDB" id="9802366at2"/>
<dbReference type="Proteomes" id="UP000000555">
    <property type="component" value="Chromosome"/>
</dbReference>
<dbReference type="GO" id="GO:0015935">
    <property type="term" value="C:small ribosomal subunit"/>
    <property type="evidence" value="ECO:0007669"/>
    <property type="project" value="InterPro"/>
</dbReference>
<dbReference type="GO" id="GO:0019843">
    <property type="term" value="F:rRNA binding"/>
    <property type="evidence" value="ECO:0007669"/>
    <property type="project" value="UniProtKB-UniRule"/>
</dbReference>
<dbReference type="GO" id="GO:0003735">
    <property type="term" value="F:structural constituent of ribosome"/>
    <property type="evidence" value="ECO:0007669"/>
    <property type="project" value="InterPro"/>
</dbReference>
<dbReference type="GO" id="GO:0000049">
    <property type="term" value="F:tRNA binding"/>
    <property type="evidence" value="ECO:0007669"/>
    <property type="project" value="UniProtKB-UniRule"/>
</dbReference>
<dbReference type="GO" id="GO:0006412">
    <property type="term" value="P:translation"/>
    <property type="evidence" value="ECO:0007669"/>
    <property type="project" value="UniProtKB-UniRule"/>
</dbReference>
<dbReference type="CDD" id="cd03368">
    <property type="entry name" value="Ribosomal_S12"/>
    <property type="match status" value="1"/>
</dbReference>
<dbReference type="FunFam" id="2.40.50.140:FF:000001">
    <property type="entry name" value="30S ribosomal protein S12"/>
    <property type="match status" value="1"/>
</dbReference>
<dbReference type="Gene3D" id="2.40.50.140">
    <property type="entry name" value="Nucleic acid-binding proteins"/>
    <property type="match status" value="1"/>
</dbReference>
<dbReference type="HAMAP" id="MF_00403_B">
    <property type="entry name" value="Ribosomal_uS12_B"/>
    <property type="match status" value="1"/>
</dbReference>
<dbReference type="InterPro" id="IPR012340">
    <property type="entry name" value="NA-bd_OB-fold"/>
</dbReference>
<dbReference type="InterPro" id="IPR006032">
    <property type="entry name" value="Ribosomal_uS12"/>
</dbReference>
<dbReference type="InterPro" id="IPR005679">
    <property type="entry name" value="Ribosomal_uS12_bac"/>
</dbReference>
<dbReference type="NCBIfam" id="TIGR00981">
    <property type="entry name" value="rpsL_bact"/>
    <property type="match status" value="1"/>
</dbReference>
<dbReference type="PANTHER" id="PTHR11652">
    <property type="entry name" value="30S RIBOSOMAL PROTEIN S12 FAMILY MEMBER"/>
    <property type="match status" value="1"/>
</dbReference>
<dbReference type="Pfam" id="PF00164">
    <property type="entry name" value="Ribosom_S12_S23"/>
    <property type="match status" value="1"/>
</dbReference>
<dbReference type="PIRSF" id="PIRSF002133">
    <property type="entry name" value="Ribosomal_S12/S23"/>
    <property type="match status" value="1"/>
</dbReference>
<dbReference type="PRINTS" id="PR01034">
    <property type="entry name" value="RIBOSOMALS12"/>
</dbReference>
<dbReference type="SUPFAM" id="SSF50249">
    <property type="entry name" value="Nucleic acid-binding proteins"/>
    <property type="match status" value="1"/>
</dbReference>
<dbReference type="PROSITE" id="PS00055">
    <property type="entry name" value="RIBOSOMAL_S12"/>
    <property type="match status" value="1"/>
</dbReference>
<protein>
    <recommendedName>
        <fullName evidence="2">Small ribosomal subunit protein uS12</fullName>
    </recommendedName>
    <alternativeName>
        <fullName evidence="3">30S ribosomal protein S12</fullName>
    </alternativeName>
</protein>
<feature type="chain" id="PRO_0000146343" description="Small ribosomal subunit protein uS12">
    <location>
        <begin position="1"/>
        <end position="124"/>
    </location>
</feature>
<feature type="modified residue" description="3-methylthioaspartic acid" evidence="1">
    <location>
        <position position="89"/>
    </location>
</feature>
<keyword id="KW-0488">Methylation</keyword>
<keyword id="KW-1185">Reference proteome</keyword>
<keyword id="KW-0687">Ribonucleoprotein</keyword>
<keyword id="KW-0689">Ribosomal protein</keyword>
<keyword id="KW-0694">RNA-binding</keyword>
<keyword id="KW-0699">rRNA-binding</keyword>
<keyword id="KW-0820">tRNA-binding</keyword>
<reference key="1">
    <citation type="journal article" date="2002" name="Genome Res.">
        <title>A complete sequence of the T. tengcongensis genome.</title>
        <authorList>
            <person name="Bao Q."/>
            <person name="Tian Y."/>
            <person name="Li W."/>
            <person name="Xu Z."/>
            <person name="Xuan Z."/>
            <person name="Hu S."/>
            <person name="Dong W."/>
            <person name="Yang J."/>
            <person name="Chen Y."/>
            <person name="Xue Y."/>
            <person name="Xu Y."/>
            <person name="Lai X."/>
            <person name="Huang L."/>
            <person name="Dong X."/>
            <person name="Ma Y."/>
            <person name="Ling L."/>
            <person name="Tan H."/>
            <person name="Chen R."/>
            <person name="Wang J."/>
            <person name="Yu J."/>
            <person name="Yang H."/>
        </authorList>
    </citation>
    <scope>NUCLEOTIDE SEQUENCE [LARGE SCALE GENOMIC DNA]</scope>
    <source>
        <strain>DSM 15242 / JCM 11007 / NBRC 100824 / MB4</strain>
    </source>
</reference>
<proteinExistence type="inferred from homology"/>
<gene>
    <name evidence="2" type="primary">rpsL</name>
    <name type="ordered locus">TTE2298</name>
</gene>
<accession>Q8R7U9</accession>
<name>RS12_CALS4</name>
<sequence length="124" mass="13514">MPTVNQLVRFGRQSVKKKSAAPALQGNPQKRGVCVVVRTTTPKKPNSALRKIARVRLTNGIEVTAYIPGIGHNLQEHSVVLVRGGRVKDLPGVRYKIIRGALDAAGVANRKQARSRYGAKKPKK</sequence>
<organism>
    <name type="scientific">Caldanaerobacter subterraneus subsp. tengcongensis (strain DSM 15242 / JCM 11007 / NBRC 100824 / MB4)</name>
    <name type="common">Thermoanaerobacter tengcongensis</name>
    <dbReference type="NCBI Taxonomy" id="273068"/>
    <lineage>
        <taxon>Bacteria</taxon>
        <taxon>Bacillati</taxon>
        <taxon>Bacillota</taxon>
        <taxon>Clostridia</taxon>
        <taxon>Thermoanaerobacterales</taxon>
        <taxon>Thermoanaerobacteraceae</taxon>
        <taxon>Caldanaerobacter</taxon>
    </lineage>
</organism>